<keyword id="KW-0256">Endoplasmic reticulum</keyword>
<keyword id="KW-0349">Heme</keyword>
<keyword id="KW-0408">Iron</keyword>
<keyword id="KW-0472">Membrane</keyword>
<keyword id="KW-0479">Metal-binding</keyword>
<keyword id="KW-0492">Microsome</keyword>
<keyword id="KW-0503">Monooxygenase</keyword>
<keyword id="KW-0560">Oxidoreductase</keyword>
<keyword id="KW-1185">Reference proteome</keyword>
<gene>
    <name type="primary">CYP2C20</name>
</gene>
<reference key="1">
    <citation type="journal article" date="1992" name="Biochim. Biophys. Acta">
        <title>Molecular cloning of monkey liver cytochrome P-450 cDNAs: similarity of the primary sequences to human cytochromes P-450.</title>
        <authorList>
            <person name="Komori M."/>
            <person name="Kikuchi O."/>
            <person name="Sakuma T."/>
            <person name="Funaki J."/>
            <person name="Kitada M."/>
            <person name="Kamataki T."/>
        </authorList>
    </citation>
    <scope>NUCLEOTIDE SEQUENCE [MRNA]</scope>
    <source>
        <tissue>Liver</tissue>
    </source>
</reference>
<dbReference type="EC" id="1.14.14.1"/>
<dbReference type="EMBL" id="S53046">
    <property type="protein sequence ID" value="AAB24950.1"/>
    <property type="molecule type" value="mRNA"/>
</dbReference>
<dbReference type="PIR" id="S28166">
    <property type="entry name" value="S28166"/>
</dbReference>
<dbReference type="RefSeq" id="NP_001270692.1">
    <property type="nucleotide sequence ID" value="NM_001283763.1"/>
</dbReference>
<dbReference type="SMR" id="P33262"/>
<dbReference type="STRING" id="9541.ENSMFAP00000035864"/>
<dbReference type="eggNOG" id="KOG0156">
    <property type="taxonomic scope" value="Eukaryota"/>
</dbReference>
<dbReference type="Proteomes" id="UP000233100">
    <property type="component" value="Unplaced"/>
</dbReference>
<dbReference type="GO" id="GO:0005789">
    <property type="term" value="C:endoplasmic reticulum membrane"/>
    <property type="evidence" value="ECO:0007669"/>
    <property type="project" value="UniProtKB-SubCell"/>
</dbReference>
<dbReference type="GO" id="GO:0020037">
    <property type="term" value="F:heme binding"/>
    <property type="evidence" value="ECO:0007669"/>
    <property type="project" value="InterPro"/>
</dbReference>
<dbReference type="GO" id="GO:0005506">
    <property type="term" value="F:iron ion binding"/>
    <property type="evidence" value="ECO:0007669"/>
    <property type="project" value="InterPro"/>
</dbReference>
<dbReference type="GO" id="GO:0016712">
    <property type="term" value="F:oxidoreductase activity, acting on paired donors, with incorporation or reduction of molecular oxygen, reduced flavin or flavoprotein as one donor, and incorporation of one atom of oxygen"/>
    <property type="evidence" value="ECO:0007669"/>
    <property type="project" value="UniProtKB-EC"/>
</dbReference>
<dbReference type="GO" id="GO:0006082">
    <property type="term" value="P:organic acid metabolic process"/>
    <property type="evidence" value="ECO:0007669"/>
    <property type="project" value="TreeGrafter"/>
</dbReference>
<dbReference type="GO" id="GO:0006805">
    <property type="term" value="P:xenobiotic metabolic process"/>
    <property type="evidence" value="ECO:0007669"/>
    <property type="project" value="TreeGrafter"/>
</dbReference>
<dbReference type="CDD" id="cd20665">
    <property type="entry name" value="CYP2C-like"/>
    <property type="match status" value="1"/>
</dbReference>
<dbReference type="FunFam" id="1.10.630.10:FF:000299">
    <property type="entry name" value="Cytochrome P450 2C9"/>
    <property type="match status" value="1"/>
</dbReference>
<dbReference type="Gene3D" id="1.10.630.10">
    <property type="entry name" value="Cytochrome P450"/>
    <property type="match status" value="1"/>
</dbReference>
<dbReference type="InterPro" id="IPR001128">
    <property type="entry name" value="Cyt_P450"/>
</dbReference>
<dbReference type="InterPro" id="IPR017972">
    <property type="entry name" value="Cyt_P450_CS"/>
</dbReference>
<dbReference type="InterPro" id="IPR002401">
    <property type="entry name" value="Cyt_P450_E_grp-I"/>
</dbReference>
<dbReference type="InterPro" id="IPR036396">
    <property type="entry name" value="Cyt_P450_sf"/>
</dbReference>
<dbReference type="InterPro" id="IPR050182">
    <property type="entry name" value="Cytochrome_P450_fam2"/>
</dbReference>
<dbReference type="PANTHER" id="PTHR24300:SF317">
    <property type="entry name" value="CYTOCHROME P450 2C8"/>
    <property type="match status" value="1"/>
</dbReference>
<dbReference type="PANTHER" id="PTHR24300">
    <property type="entry name" value="CYTOCHROME P450 508A4-RELATED"/>
    <property type="match status" value="1"/>
</dbReference>
<dbReference type="Pfam" id="PF00067">
    <property type="entry name" value="p450"/>
    <property type="match status" value="1"/>
</dbReference>
<dbReference type="PRINTS" id="PR00463">
    <property type="entry name" value="EP450I"/>
</dbReference>
<dbReference type="PRINTS" id="PR00385">
    <property type="entry name" value="P450"/>
</dbReference>
<dbReference type="SUPFAM" id="SSF48264">
    <property type="entry name" value="Cytochrome P450"/>
    <property type="match status" value="1"/>
</dbReference>
<dbReference type="PROSITE" id="PS00086">
    <property type="entry name" value="CYTOCHROME_P450"/>
    <property type="match status" value="1"/>
</dbReference>
<evidence type="ECO:0000250" key="1"/>
<evidence type="ECO:0000305" key="2"/>
<comment type="function">
    <text>Cytochromes P450 are a group of heme-thiolate monooxygenases. In liver microsomes, this enzyme is involved in an NADPH-dependent electron transport pathway. It oxidizes a variety of structurally unrelated compounds, including steroids, fatty acids, and xenobiotics.</text>
</comment>
<comment type="catalytic activity">
    <reaction>
        <text>an organic molecule + reduced [NADPH--hemoprotein reductase] + O2 = an alcohol + oxidized [NADPH--hemoprotein reductase] + H2O + H(+)</text>
        <dbReference type="Rhea" id="RHEA:17149"/>
        <dbReference type="Rhea" id="RHEA-COMP:11964"/>
        <dbReference type="Rhea" id="RHEA-COMP:11965"/>
        <dbReference type="ChEBI" id="CHEBI:15377"/>
        <dbReference type="ChEBI" id="CHEBI:15378"/>
        <dbReference type="ChEBI" id="CHEBI:15379"/>
        <dbReference type="ChEBI" id="CHEBI:30879"/>
        <dbReference type="ChEBI" id="CHEBI:57618"/>
        <dbReference type="ChEBI" id="CHEBI:58210"/>
        <dbReference type="ChEBI" id="CHEBI:142491"/>
        <dbReference type="EC" id="1.14.14.1"/>
    </reaction>
</comment>
<comment type="cofactor">
    <cofactor evidence="1">
        <name>heme</name>
        <dbReference type="ChEBI" id="CHEBI:30413"/>
    </cofactor>
</comment>
<comment type="subcellular location">
    <subcellularLocation>
        <location>Endoplasmic reticulum membrane</location>
        <topology>Peripheral membrane protein</topology>
    </subcellularLocation>
    <subcellularLocation>
        <location>Microsome membrane</location>
        <topology>Peripheral membrane protein</topology>
    </subcellularLocation>
</comment>
<comment type="induction">
    <text>By 3-methylcholanthrene (3MC).</text>
</comment>
<comment type="similarity">
    <text evidence="2">Belongs to the cytochrome P450 family.</text>
</comment>
<name>CP2CK_MACFA</name>
<sequence>MDPFVVLVLCLSFVLLFSLWRQSSGRRKLPPGPTPLPIIGNILQIDVKDICKSFSNFSKVYGPVFTVYFGMNPVVVLHGYETVKEALIDNAEEFSGRGILPISERITNGLGIISSNGKRWKETRRFSLTTLRNFGMGKRSIEDRVQEEARCLVEELRKTKASPCDPTFILGCAPCNVICSVVFQKRFDYKDENFLTLIKRFTVNFRILTSPWIQVCNNFPLLIDCFPGTHNKLLKNVALTKSYIREKVKEHQATLDVNNPRDFIDCFLIKMEQEKDNQQSEFTIENLVGTVADLFVAGTETTSTTLRYGLLLLLKHPEVTAKVQEEIDHVIGRHRSPCMQDRSHMPYTDAVIHEIQRYIDLVPTGVPHAVTTDIKFRNYLIPKGTIIITLLTSVLHDDKEFPNPKIFDPGHFLDENGNFKKSDYFMPFSAGKRICAGEGLARMELFLFLTTILQNFNLKSVADLKNLNTTSATRGIISLPPSYQICFIPV</sequence>
<accession>P33262</accession>
<protein>
    <recommendedName>
        <fullName>Cytochrome P450 2C20</fullName>
        <ecNumber>1.14.14.1</ecNumber>
    </recommendedName>
    <alternativeName>
        <fullName>CYPIIC20</fullName>
    </alternativeName>
    <alternativeName>
        <fullName>Cytochrome P450-MK1</fullName>
    </alternativeName>
    <alternativeName>
        <fullName>Cytochrome P450-MKMP13</fullName>
    </alternativeName>
</protein>
<feature type="chain" id="PRO_0000051709" description="Cytochrome P450 2C20">
    <location>
        <begin position="1"/>
        <end position="490"/>
    </location>
</feature>
<feature type="binding site" description="axial binding residue" evidence="1">
    <location>
        <position position="435"/>
    </location>
    <ligand>
        <name>heme</name>
        <dbReference type="ChEBI" id="CHEBI:30413"/>
    </ligand>
    <ligandPart>
        <name>Fe</name>
        <dbReference type="ChEBI" id="CHEBI:18248"/>
    </ligandPart>
</feature>
<proteinExistence type="evidence at transcript level"/>
<organism>
    <name type="scientific">Macaca fascicularis</name>
    <name type="common">Crab-eating macaque</name>
    <name type="synonym">Cynomolgus monkey</name>
    <dbReference type="NCBI Taxonomy" id="9541"/>
    <lineage>
        <taxon>Eukaryota</taxon>
        <taxon>Metazoa</taxon>
        <taxon>Chordata</taxon>
        <taxon>Craniata</taxon>
        <taxon>Vertebrata</taxon>
        <taxon>Euteleostomi</taxon>
        <taxon>Mammalia</taxon>
        <taxon>Eutheria</taxon>
        <taxon>Euarchontoglires</taxon>
        <taxon>Primates</taxon>
        <taxon>Haplorrhini</taxon>
        <taxon>Catarrhini</taxon>
        <taxon>Cercopithecidae</taxon>
        <taxon>Cercopithecinae</taxon>
        <taxon>Macaca</taxon>
    </lineage>
</organism>